<gene>
    <name evidence="1" type="primary">dapB</name>
    <name type="ordered locus">cgR_1802</name>
</gene>
<sequence>MGIKVGVLGAKGRVGQTIVAAVNESDDLELVAEIGVDDDLSLLVDNGAEVVVDFTTPNAVMGNLEFCINNGISAVVGTTGFDDARLEQVRAWLEGKDNVGVLIAPNFAISAVLTMVFSKQAARFFESAEVIELHHPNKLDAPSGTAIHTAQGIAAARKEAGMDAQPDATEQALEGSRGASVDGIPVHAVRMSGMVAHEQVIFGTQGQTLTIKQDSYDRNSFAPGVLVGVRNIAQHPGLVVGLEHYLGL</sequence>
<comment type="function">
    <text evidence="1">Catalyzes the conversion of 4-hydroxy-tetrahydrodipicolinate (HTPA) to tetrahydrodipicolinate.</text>
</comment>
<comment type="catalytic activity">
    <reaction evidence="1">
        <text>(S)-2,3,4,5-tetrahydrodipicolinate + NAD(+) + H2O = (2S,4S)-4-hydroxy-2,3,4,5-tetrahydrodipicolinate + NADH + H(+)</text>
        <dbReference type="Rhea" id="RHEA:35323"/>
        <dbReference type="ChEBI" id="CHEBI:15377"/>
        <dbReference type="ChEBI" id="CHEBI:15378"/>
        <dbReference type="ChEBI" id="CHEBI:16845"/>
        <dbReference type="ChEBI" id="CHEBI:57540"/>
        <dbReference type="ChEBI" id="CHEBI:57945"/>
        <dbReference type="ChEBI" id="CHEBI:67139"/>
        <dbReference type="EC" id="1.17.1.8"/>
    </reaction>
</comment>
<comment type="catalytic activity">
    <reaction evidence="1">
        <text>(S)-2,3,4,5-tetrahydrodipicolinate + NADP(+) + H2O = (2S,4S)-4-hydroxy-2,3,4,5-tetrahydrodipicolinate + NADPH + H(+)</text>
        <dbReference type="Rhea" id="RHEA:35331"/>
        <dbReference type="ChEBI" id="CHEBI:15377"/>
        <dbReference type="ChEBI" id="CHEBI:15378"/>
        <dbReference type="ChEBI" id="CHEBI:16845"/>
        <dbReference type="ChEBI" id="CHEBI:57783"/>
        <dbReference type="ChEBI" id="CHEBI:58349"/>
        <dbReference type="ChEBI" id="CHEBI:67139"/>
        <dbReference type="EC" id="1.17.1.8"/>
    </reaction>
</comment>
<comment type="pathway">
    <text evidence="1">Amino-acid biosynthesis; L-lysine biosynthesis via DAP pathway; (S)-tetrahydrodipicolinate from L-aspartate: step 4/4.</text>
</comment>
<comment type="subcellular location">
    <subcellularLocation>
        <location evidence="1">Cytoplasm</location>
    </subcellularLocation>
</comment>
<comment type="similarity">
    <text evidence="1">Belongs to the DapB family.</text>
</comment>
<comment type="caution">
    <text evidence="2">Was originally thought to be a dihydrodipicolinate reductase (DHDPR), catalyzing the conversion of dihydrodipicolinate to tetrahydrodipicolinate. However, it was shown in E.coli that the substrate of the enzymatic reaction is not dihydrodipicolinate (DHDP) but in fact (2S,4S)-4-hydroxy-2,3,4,5-tetrahydrodipicolinic acid (HTPA), the product released by the DapA-catalyzed reaction.</text>
</comment>
<organism>
    <name type="scientific">Corynebacterium glutamicum (strain R)</name>
    <dbReference type="NCBI Taxonomy" id="340322"/>
    <lineage>
        <taxon>Bacteria</taxon>
        <taxon>Bacillati</taxon>
        <taxon>Actinomycetota</taxon>
        <taxon>Actinomycetes</taxon>
        <taxon>Mycobacteriales</taxon>
        <taxon>Corynebacteriaceae</taxon>
        <taxon>Corynebacterium</taxon>
    </lineage>
</organism>
<protein>
    <recommendedName>
        <fullName evidence="1">4-hydroxy-tetrahydrodipicolinate reductase</fullName>
        <shortName evidence="1">HTPA reductase</shortName>
        <ecNumber evidence="1">1.17.1.8</ecNumber>
    </recommendedName>
</protein>
<accession>A4QEY0</accession>
<dbReference type="EC" id="1.17.1.8" evidence="1"/>
<dbReference type="EMBL" id="AP009044">
    <property type="protein sequence ID" value="BAF54796.1"/>
    <property type="molecule type" value="Genomic_DNA"/>
</dbReference>
<dbReference type="RefSeq" id="WP_003857479.1">
    <property type="nucleotide sequence ID" value="NC_009342.1"/>
</dbReference>
<dbReference type="SMR" id="A4QEY0"/>
<dbReference type="KEGG" id="cgt:cgR_1802"/>
<dbReference type="HOGENOM" id="CLU_047479_0_1_11"/>
<dbReference type="PhylomeDB" id="A4QEY0"/>
<dbReference type="UniPathway" id="UPA00034">
    <property type="reaction ID" value="UER00018"/>
</dbReference>
<dbReference type="Proteomes" id="UP000006698">
    <property type="component" value="Chromosome"/>
</dbReference>
<dbReference type="GO" id="GO:0005829">
    <property type="term" value="C:cytosol"/>
    <property type="evidence" value="ECO:0007669"/>
    <property type="project" value="TreeGrafter"/>
</dbReference>
<dbReference type="GO" id="GO:0008839">
    <property type="term" value="F:4-hydroxy-tetrahydrodipicolinate reductase"/>
    <property type="evidence" value="ECO:0007669"/>
    <property type="project" value="UniProtKB-EC"/>
</dbReference>
<dbReference type="GO" id="GO:0051287">
    <property type="term" value="F:NAD binding"/>
    <property type="evidence" value="ECO:0007669"/>
    <property type="project" value="UniProtKB-UniRule"/>
</dbReference>
<dbReference type="GO" id="GO:0050661">
    <property type="term" value="F:NADP binding"/>
    <property type="evidence" value="ECO:0007669"/>
    <property type="project" value="UniProtKB-UniRule"/>
</dbReference>
<dbReference type="GO" id="GO:0016726">
    <property type="term" value="F:oxidoreductase activity, acting on CH or CH2 groups, NAD or NADP as acceptor"/>
    <property type="evidence" value="ECO:0007669"/>
    <property type="project" value="UniProtKB-UniRule"/>
</dbReference>
<dbReference type="GO" id="GO:0019877">
    <property type="term" value="P:diaminopimelate biosynthetic process"/>
    <property type="evidence" value="ECO:0007669"/>
    <property type="project" value="UniProtKB-UniRule"/>
</dbReference>
<dbReference type="GO" id="GO:0009089">
    <property type="term" value="P:lysine biosynthetic process via diaminopimelate"/>
    <property type="evidence" value="ECO:0007669"/>
    <property type="project" value="UniProtKB-UniRule"/>
</dbReference>
<dbReference type="CDD" id="cd02274">
    <property type="entry name" value="DHDPR_N"/>
    <property type="match status" value="1"/>
</dbReference>
<dbReference type="FunFam" id="3.30.360.10:FF:000009">
    <property type="entry name" value="4-hydroxy-tetrahydrodipicolinate reductase"/>
    <property type="match status" value="1"/>
</dbReference>
<dbReference type="Gene3D" id="3.30.360.10">
    <property type="entry name" value="Dihydrodipicolinate Reductase, domain 2"/>
    <property type="match status" value="1"/>
</dbReference>
<dbReference type="Gene3D" id="3.40.50.720">
    <property type="entry name" value="NAD(P)-binding Rossmann-like Domain"/>
    <property type="match status" value="1"/>
</dbReference>
<dbReference type="HAMAP" id="MF_00102">
    <property type="entry name" value="DapB"/>
    <property type="match status" value="1"/>
</dbReference>
<dbReference type="InterPro" id="IPR022663">
    <property type="entry name" value="DapB_C"/>
</dbReference>
<dbReference type="InterPro" id="IPR000846">
    <property type="entry name" value="DapB_N"/>
</dbReference>
<dbReference type="InterPro" id="IPR022664">
    <property type="entry name" value="DapB_N_CS"/>
</dbReference>
<dbReference type="InterPro" id="IPR023940">
    <property type="entry name" value="DHDPR_bac"/>
</dbReference>
<dbReference type="InterPro" id="IPR036291">
    <property type="entry name" value="NAD(P)-bd_dom_sf"/>
</dbReference>
<dbReference type="NCBIfam" id="TIGR00036">
    <property type="entry name" value="dapB"/>
    <property type="match status" value="1"/>
</dbReference>
<dbReference type="PANTHER" id="PTHR20836:SF0">
    <property type="entry name" value="4-HYDROXY-TETRAHYDRODIPICOLINATE REDUCTASE 1, CHLOROPLASTIC-RELATED"/>
    <property type="match status" value="1"/>
</dbReference>
<dbReference type="PANTHER" id="PTHR20836">
    <property type="entry name" value="DIHYDRODIPICOLINATE REDUCTASE"/>
    <property type="match status" value="1"/>
</dbReference>
<dbReference type="Pfam" id="PF05173">
    <property type="entry name" value="DapB_C"/>
    <property type="match status" value="1"/>
</dbReference>
<dbReference type="Pfam" id="PF01113">
    <property type="entry name" value="DapB_N"/>
    <property type="match status" value="1"/>
</dbReference>
<dbReference type="PIRSF" id="PIRSF000161">
    <property type="entry name" value="DHPR"/>
    <property type="match status" value="1"/>
</dbReference>
<dbReference type="SUPFAM" id="SSF55347">
    <property type="entry name" value="Glyceraldehyde-3-phosphate dehydrogenase-like, C-terminal domain"/>
    <property type="match status" value="1"/>
</dbReference>
<dbReference type="SUPFAM" id="SSF51735">
    <property type="entry name" value="NAD(P)-binding Rossmann-fold domains"/>
    <property type="match status" value="1"/>
</dbReference>
<dbReference type="PROSITE" id="PS01298">
    <property type="entry name" value="DAPB"/>
    <property type="match status" value="1"/>
</dbReference>
<feature type="chain" id="PRO_1000008559" description="4-hydroxy-tetrahydrodipicolinate reductase">
    <location>
        <begin position="1"/>
        <end position="248"/>
    </location>
</feature>
<feature type="active site" description="Proton donor/acceptor" evidence="1">
    <location>
        <position position="134"/>
    </location>
</feature>
<feature type="active site" description="Proton donor" evidence="1">
    <location>
        <position position="138"/>
    </location>
</feature>
<feature type="binding site" evidence="1">
    <location>
        <begin position="9"/>
        <end position="14"/>
    </location>
    <ligand>
        <name>NAD(+)</name>
        <dbReference type="ChEBI" id="CHEBI:57540"/>
    </ligand>
</feature>
<feature type="binding site" evidence="1">
    <location>
        <begin position="77"/>
        <end position="79"/>
    </location>
    <ligand>
        <name>NAD(+)</name>
        <dbReference type="ChEBI" id="CHEBI:57540"/>
    </ligand>
</feature>
<feature type="binding site" evidence="1">
    <location>
        <begin position="104"/>
        <end position="107"/>
    </location>
    <ligand>
        <name>NAD(+)</name>
        <dbReference type="ChEBI" id="CHEBI:57540"/>
    </ligand>
</feature>
<feature type="binding site" evidence="1">
    <location>
        <position position="135"/>
    </location>
    <ligand>
        <name>(S)-2,3,4,5-tetrahydrodipicolinate</name>
        <dbReference type="ChEBI" id="CHEBI:16845"/>
    </ligand>
</feature>
<feature type="binding site" evidence="1">
    <location>
        <begin position="144"/>
        <end position="145"/>
    </location>
    <ligand>
        <name>(S)-2,3,4,5-tetrahydrodipicolinate</name>
        <dbReference type="ChEBI" id="CHEBI:16845"/>
    </ligand>
</feature>
<proteinExistence type="inferred from homology"/>
<keyword id="KW-0028">Amino-acid biosynthesis</keyword>
<keyword id="KW-0963">Cytoplasm</keyword>
<keyword id="KW-0220">Diaminopimelate biosynthesis</keyword>
<keyword id="KW-0457">Lysine biosynthesis</keyword>
<keyword id="KW-0520">NAD</keyword>
<keyword id="KW-0521">NADP</keyword>
<keyword id="KW-0560">Oxidoreductase</keyword>
<name>DAPB_CORGB</name>
<evidence type="ECO:0000255" key="1">
    <source>
        <dbReference type="HAMAP-Rule" id="MF_00102"/>
    </source>
</evidence>
<evidence type="ECO:0000305" key="2"/>
<reference key="1">
    <citation type="journal article" date="2007" name="Microbiology">
        <title>Comparative analysis of the Corynebacterium glutamicum group and complete genome sequence of strain R.</title>
        <authorList>
            <person name="Yukawa H."/>
            <person name="Omumasaba C.A."/>
            <person name="Nonaka H."/>
            <person name="Kos P."/>
            <person name="Okai N."/>
            <person name="Suzuki N."/>
            <person name="Suda M."/>
            <person name="Tsuge Y."/>
            <person name="Watanabe J."/>
            <person name="Ikeda Y."/>
            <person name="Vertes A.A."/>
            <person name="Inui M."/>
        </authorList>
    </citation>
    <scope>NUCLEOTIDE SEQUENCE [LARGE SCALE GENOMIC DNA]</scope>
    <source>
        <strain>R</strain>
    </source>
</reference>